<organism>
    <name type="scientific">Petromyzon marinus</name>
    <name type="common">Sea lamprey</name>
    <dbReference type="NCBI Taxonomy" id="7757"/>
    <lineage>
        <taxon>Eukaryota</taxon>
        <taxon>Metazoa</taxon>
        <taxon>Chordata</taxon>
        <taxon>Craniata</taxon>
        <taxon>Vertebrata</taxon>
        <taxon>Cyclostomata</taxon>
        <taxon>Hyperoartia</taxon>
        <taxon>Petromyzontiformes</taxon>
        <taxon>Petromyzontidae</taxon>
        <taxon>Petromyzon</taxon>
    </lineage>
</organism>
<evidence type="ECO:0000250" key="1">
    <source>
        <dbReference type="UniProtKB" id="P02699"/>
    </source>
</evidence>
<evidence type="ECO:0000250" key="2">
    <source>
        <dbReference type="UniProtKB" id="P08100"/>
    </source>
</evidence>
<evidence type="ECO:0000250" key="3">
    <source>
        <dbReference type="UniProtKB" id="P32309"/>
    </source>
</evidence>
<evidence type="ECO:0000250" key="4">
    <source>
        <dbReference type="UniProtKB" id="P35359"/>
    </source>
</evidence>
<evidence type="ECO:0000255" key="5"/>
<evidence type="ECO:0000255" key="6">
    <source>
        <dbReference type="PROSITE-ProRule" id="PRU00521"/>
    </source>
</evidence>
<evidence type="ECO:0000256" key="7">
    <source>
        <dbReference type="SAM" id="MobiDB-lite"/>
    </source>
</evidence>
<evidence type="ECO:0000305" key="8"/>
<gene>
    <name type="primary">RHO</name>
</gene>
<reference key="1">
    <citation type="journal article" date="1997" name="Gene">
        <title>Molecular evolution of the rhodopsin gene of marine lamprey, Petromyzon marinus.</title>
        <authorList>
            <person name="Zhang H."/>
            <person name="Yokoyama S."/>
        </authorList>
    </citation>
    <scope>NUCLEOTIDE SEQUENCE [GENOMIC DNA]</scope>
</reference>
<comment type="function">
    <text evidence="1 2 3">Photoreceptor required for image-forming vision at low light intensity. While most salt water fish species use retinal as chromophore, most freshwater fish use 3-dehydroretinal, or a mixture of retinal and 3-dehydroretinal (By similarity). Light-induced isomerization of 11-cis to all-trans retinal triggers a conformational change that activates signaling via G-proteins. Subsequent receptor phosphorylation mediates displacement of the bound G-protein alpha subunit by arrestin and terminates signaling (By similarity).</text>
</comment>
<comment type="subcellular location">
    <subcellularLocation>
        <location evidence="2">Membrane</location>
        <topology evidence="2">Multi-pass membrane protein</topology>
    </subcellularLocation>
    <subcellularLocation>
        <location evidence="4">Cell projection</location>
        <location evidence="4">Cilium</location>
        <location evidence="4">Photoreceptor outer segment</location>
    </subcellularLocation>
    <text evidence="2">Synthesized in the inner segment (IS) of rod photoreceptor cells before vectorial transport to disk membranes in the rod outer segment (OS) photosensory cilia.</text>
</comment>
<comment type="PTM">
    <text evidence="1">Phosphorylated on some or all of the serine and threonine residues present in the C-terminal region.</text>
</comment>
<comment type="PTM">
    <text evidence="1">Contains one covalently linked retinal chromophore.</text>
</comment>
<comment type="similarity">
    <text evidence="6">Belongs to the G-protein coupled receptor 1 family. Opsin subfamily.</text>
</comment>
<sequence length="353" mass="39669">MNGTEGENFYIPFSNKTGLARSPFEYPQYYLAEPWKYSVLAAYMFFLILVGFPVNFLTLFVTVQHKKLRTPLNYILLNLAVANLFMVLFGFTLTMYSSMNGYFVFGPTMCNFEGFFATLGGEMSLWSLVVLAIERYIVICKPMGNFRFGSTHAYMGVAFTWFMALSCAAPPLVGWSRYLPEGMQCSCGPDYYTLNPNFNNESFVIYMFLVHFIIPFIVIFFCYGRLLCTVKEAAAAQQESASTQKAEKEVTRMVVLMVIGFLVCWVPYASVAFYIFTHQGSDFGATFMTVPAFFAKTSALYNPIIYILMNKQFRNCMITTLCCGKNPLGDEDSGASTSKTEVSSVSTSQVSPA</sequence>
<proteinExistence type="inferred from homology"/>
<accession>Q98980</accession>
<protein>
    <recommendedName>
        <fullName>Rhodopsin</fullName>
    </recommendedName>
</protein>
<name>OPSD_PETMA</name>
<dbReference type="EMBL" id="U67127">
    <property type="protein sequence ID" value="AAB62981.1"/>
    <property type="molecule type" value="Genomic_DNA"/>
</dbReference>
<dbReference type="EMBL" id="U67123">
    <property type="protein sequence ID" value="AAB62981.1"/>
    <property type="status" value="JOINED"/>
    <property type="molecule type" value="Genomic_DNA"/>
</dbReference>
<dbReference type="EMBL" id="U67124">
    <property type="protein sequence ID" value="AAB62981.1"/>
    <property type="status" value="JOINED"/>
    <property type="molecule type" value="Genomic_DNA"/>
</dbReference>
<dbReference type="EMBL" id="U67125">
    <property type="protein sequence ID" value="AAB62981.1"/>
    <property type="status" value="JOINED"/>
    <property type="molecule type" value="Genomic_DNA"/>
</dbReference>
<dbReference type="EMBL" id="U67126">
    <property type="protein sequence ID" value="AAB62981.1"/>
    <property type="status" value="JOINED"/>
    <property type="molecule type" value="Genomic_DNA"/>
</dbReference>
<dbReference type="RefSeq" id="XP_032827379.1">
    <property type="nucleotide sequence ID" value="XM_032971488.1"/>
</dbReference>
<dbReference type="SMR" id="Q98980"/>
<dbReference type="GlyCosmos" id="Q98980">
    <property type="glycosylation" value="2 sites, No reported glycans"/>
</dbReference>
<dbReference type="GeneID" id="116952281"/>
<dbReference type="OrthoDB" id="5962323at2759"/>
<dbReference type="Proteomes" id="UP001318040">
    <property type="component" value="Chromosome 46"/>
</dbReference>
<dbReference type="GO" id="GO:0016020">
    <property type="term" value="C:membrane"/>
    <property type="evidence" value="ECO:0000250"/>
    <property type="project" value="UniProtKB"/>
</dbReference>
<dbReference type="GO" id="GO:0097381">
    <property type="term" value="C:photoreceptor disc membrane"/>
    <property type="evidence" value="ECO:0000250"/>
    <property type="project" value="UniProtKB"/>
</dbReference>
<dbReference type="GO" id="GO:0005886">
    <property type="term" value="C:plasma membrane"/>
    <property type="evidence" value="ECO:0000250"/>
    <property type="project" value="UniProtKB"/>
</dbReference>
<dbReference type="GO" id="GO:0005502">
    <property type="term" value="F:11-cis retinal binding"/>
    <property type="evidence" value="ECO:0000250"/>
    <property type="project" value="UniProtKB"/>
</dbReference>
<dbReference type="GO" id="GO:0008020">
    <property type="term" value="F:G protein-coupled photoreceptor activity"/>
    <property type="evidence" value="ECO:0000250"/>
    <property type="project" value="UniProtKB"/>
</dbReference>
<dbReference type="GO" id="GO:0016038">
    <property type="term" value="P:absorption of visible light"/>
    <property type="evidence" value="ECO:0000250"/>
    <property type="project" value="UniProtKB"/>
</dbReference>
<dbReference type="GO" id="GO:0016056">
    <property type="term" value="P:G protein-coupled opsin signaling pathway"/>
    <property type="evidence" value="ECO:0000250"/>
    <property type="project" value="UniProtKB"/>
</dbReference>
<dbReference type="GO" id="GO:0007601">
    <property type="term" value="P:visual perception"/>
    <property type="evidence" value="ECO:0007669"/>
    <property type="project" value="UniProtKB-KW"/>
</dbReference>
<dbReference type="FunFam" id="1.20.1070.10:FF:000018">
    <property type="entry name" value="Rhodopsin"/>
    <property type="match status" value="1"/>
</dbReference>
<dbReference type="Gene3D" id="1.20.1070.10">
    <property type="entry name" value="Rhodopsin 7-helix transmembrane proteins"/>
    <property type="match status" value="1"/>
</dbReference>
<dbReference type="InterPro" id="IPR050125">
    <property type="entry name" value="GPCR_opsins"/>
</dbReference>
<dbReference type="InterPro" id="IPR000276">
    <property type="entry name" value="GPCR_Rhodpsn"/>
</dbReference>
<dbReference type="InterPro" id="IPR017452">
    <property type="entry name" value="GPCR_Rhodpsn_7TM"/>
</dbReference>
<dbReference type="InterPro" id="IPR001760">
    <property type="entry name" value="Opsin"/>
</dbReference>
<dbReference type="InterPro" id="IPR027430">
    <property type="entry name" value="Retinal_BS"/>
</dbReference>
<dbReference type="InterPro" id="IPR000732">
    <property type="entry name" value="Rhodopsin"/>
</dbReference>
<dbReference type="InterPro" id="IPR019477">
    <property type="entry name" value="Rhodopsin_N"/>
</dbReference>
<dbReference type="PANTHER" id="PTHR24240">
    <property type="entry name" value="OPSIN"/>
    <property type="match status" value="1"/>
</dbReference>
<dbReference type="Pfam" id="PF00001">
    <property type="entry name" value="7tm_1"/>
    <property type="match status" value="1"/>
</dbReference>
<dbReference type="Pfam" id="PF10413">
    <property type="entry name" value="Rhodopsin_N"/>
    <property type="match status" value="1"/>
</dbReference>
<dbReference type="PRINTS" id="PR00237">
    <property type="entry name" value="GPCRRHODOPSN"/>
</dbReference>
<dbReference type="PRINTS" id="PR00238">
    <property type="entry name" value="OPSIN"/>
</dbReference>
<dbReference type="PRINTS" id="PR00579">
    <property type="entry name" value="RHODOPSIN"/>
</dbReference>
<dbReference type="SUPFAM" id="SSF81321">
    <property type="entry name" value="Family A G protein-coupled receptor-like"/>
    <property type="match status" value="1"/>
</dbReference>
<dbReference type="PROSITE" id="PS00237">
    <property type="entry name" value="G_PROTEIN_RECEP_F1_1"/>
    <property type="match status" value="1"/>
</dbReference>
<dbReference type="PROSITE" id="PS50262">
    <property type="entry name" value="G_PROTEIN_RECEP_F1_2"/>
    <property type="match status" value="1"/>
</dbReference>
<dbReference type="PROSITE" id="PS00238">
    <property type="entry name" value="OPSIN"/>
    <property type="match status" value="1"/>
</dbReference>
<keyword id="KW-0966">Cell projection</keyword>
<keyword id="KW-0157">Chromophore</keyword>
<keyword id="KW-1015">Disulfide bond</keyword>
<keyword id="KW-0297">G-protein coupled receptor</keyword>
<keyword id="KW-0325">Glycoprotein</keyword>
<keyword id="KW-0449">Lipoprotein</keyword>
<keyword id="KW-0472">Membrane</keyword>
<keyword id="KW-0564">Palmitate</keyword>
<keyword id="KW-0597">Phosphoprotein</keyword>
<keyword id="KW-0600">Photoreceptor protein</keyword>
<keyword id="KW-0675">Receptor</keyword>
<keyword id="KW-0681">Retinal protein</keyword>
<keyword id="KW-0716">Sensory transduction</keyword>
<keyword id="KW-0807">Transducer</keyword>
<keyword id="KW-0812">Transmembrane</keyword>
<keyword id="KW-1133">Transmembrane helix</keyword>
<keyword id="KW-0844">Vision</keyword>
<feature type="chain" id="PRO_0000197731" description="Rhodopsin">
    <location>
        <begin position="1"/>
        <end position="353"/>
    </location>
</feature>
<feature type="topological domain" description="Extracellular" evidence="8">
    <location>
        <begin position="1"/>
        <end position="36"/>
    </location>
</feature>
<feature type="transmembrane region" description="Helical; Name=1" evidence="1">
    <location>
        <begin position="37"/>
        <end position="61"/>
    </location>
</feature>
<feature type="topological domain" description="Cytoplasmic" evidence="8">
    <location>
        <begin position="62"/>
        <end position="73"/>
    </location>
</feature>
<feature type="transmembrane region" description="Helical; Name=2" evidence="1">
    <location>
        <begin position="74"/>
        <end position="96"/>
    </location>
</feature>
<feature type="topological domain" description="Extracellular" evidence="8">
    <location>
        <begin position="97"/>
        <end position="110"/>
    </location>
</feature>
<feature type="transmembrane region" description="Helical; Name=3" evidence="1">
    <location>
        <begin position="111"/>
        <end position="133"/>
    </location>
</feature>
<feature type="topological domain" description="Cytoplasmic" evidence="8">
    <location>
        <begin position="134"/>
        <end position="152"/>
    </location>
</feature>
<feature type="transmembrane region" description="Helical; Name=4" evidence="1">
    <location>
        <begin position="153"/>
        <end position="173"/>
    </location>
</feature>
<feature type="topological domain" description="Extracellular" evidence="8">
    <location>
        <begin position="174"/>
        <end position="202"/>
    </location>
</feature>
<feature type="transmembrane region" description="Helical; Name=5" evidence="1">
    <location>
        <begin position="203"/>
        <end position="224"/>
    </location>
</feature>
<feature type="topological domain" description="Cytoplasmic" evidence="8">
    <location>
        <begin position="225"/>
        <end position="252"/>
    </location>
</feature>
<feature type="transmembrane region" description="Helical; Name=6" evidence="1">
    <location>
        <begin position="253"/>
        <end position="274"/>
    </location>
</feature>
<feature type="topological domain" description="Extracellular" evidence="8">
    <location>
        <begin position="275"/>
        <end position="286"/>
    </location>
</feature>
<feature type="transmembrane region" description="Helical; Name=7" evidence="1">
    <location>
        <begin position="287"/>
        <end position="308"/>
    </location>
</feature>
<feature type="topological domain" description="Cytoplasmic" evidence="8">
    <location>
        <begin position="309"/>
        <end position="353"/>
    </location>
</feature>
<feature type="region of interest" description="Disordered" evidence="7">
    <location>
        <begin position="330"/>
        <end position="353"/>
    </location>
</feature>
<feature type="short sequence motif" description="'Ionic lock' involved in activated form stabilization" evidence="1">
    <location>
        <begin position="134"/>
        <end position="136"/>
    </location>
</feature>
<feature type="compositionally biased region" description="Low complexity" evidence="7">
    <location>
        <begin position="336"/>
        <end position="353"/>
    </location>
</feature>
<feature type="site" description="Plays an important role in the conformation switch to the active conformation" evidence="1">
    <location>
        <position position="113"/>
    </location>
</feature>
<feature type="modified residue" description="N6-(retinylidene)lysine" evidence="1">
    <location>
        <position position="296"/>
    </location>
</feature>
<feature type="glycosylation site" description="N-linked (GlcNAc...) asparagine" evidence="5">
    <location>
        <position position="2"/>
    </location>
</feature>
<feature type="glycosylation site" description="N-linked (GlcNAc...) asparagine" evidence="5">
    <location>
        <position position="15"/>
    </location>
</feature>
<feature type="disulfide bond" evidence="6">
    <location>
        <begin position="110"/>
        <end position="187"/>
    </location>
</feature>